<proteinExistence type="inferred from homology"/>
<gene>
    <name evidence="1" type="primary">nuoH</name>
    <name type="ordered locus">Bxeno_A1235</name>
    <name type="ORF">Bxe_A3207</name>
</gene>
<sequence length="354" mass="39017">MSLFDTINSGGTQLLGVAWPTVWALVRILVVAVVILLCVAYLILWERKLIGWMHVRLGPNRVGPAGLLQPIADVLKLLLKEVIQPAQASRWIYMVAPIMVVVPAFAVWAVIPFQAGAVLGDINAGLLYAMAVSSIGVYGVILAGWASNSKYAFLGAMRAAAQMVSYEISMGFALVVVLMTAGTLNLSGIVGSQEHGFFASHGLNFLSWNWLPLLPMFVVYFISGIAETNRHPFDVVEGESEIVAGHMIDYSGMAFALFFLAEYINMIVISALAATLFLGGWSAPFGFLSFIPGIVWLVAKVFFLLSVFIWARATFPRYRYDQIMRLGWKIFIPVCVVWLVVVGFWIMSPLNIWK</sequence>
<protein>
    <recommendedName>
        <fullName evidence="1">NADH-quinone oxidoreductase subunit H</fullName>
        <ecNumber evidence="1">7.1.1.-</ecNumber>
    </recommendedName>
    <alternativeName>
        <fullName evidence="1">NADH dehydrogenase I subunit H</fullName>
    </alternativeName>
    <alternativeName>
        <fullName evidence="1">NDH-1 subunit H</fullName>
    </alternativeName>
</protein>
<evidence type="ECO:0000255" key="1">
    <source>
        <dbReference type="HAMAP-Rule" id="MF_01350"/>
    </source>
</evidence>
<organism>
    <name type="scientific">Paraburkholderia xenovorans (strain LB400)</name>
    <dbReference type="NCBI Taxonomy" id="266265"/>
    <lineage>
        <taxon>Bacteria</taxon>
        <taxon>Pseudomonadati</taxon>
        <taxon>Pseudomonadota</taxon>
        <taxon>Betaproteobacteria</taxon>
        <taxon>Burkholderiales</taxon>
        <taxon>Burkholderiaceae</taxon>
        <taxon>Paraburkholderia</taxon>
    </lineage>
</organism>
<reference key="1">
    <citation type="journal article" date="2006" name="Proc. Natl. Acad. Sci. U.S.A.">
        <title>Burkholderia xenovorans LB400 harbors a multi-replicon, 9.73-Mbp genome shaped for versatility.</title>
        <authorList>
            <person name="Chain P.S.G."/>
            <person name="Denef V.J."/>
            <person name="Konstantinidis K.T."/>
            <person name="Vergez L.M."/>
            <person name="Agullo L."/>
            <person name="Reyes V.L."/>
            <person name="Hauser L."/>
            <person name="Cordova M."/>
            <person name="Gomez L."/>
            <person name="Gonzalez M."/>
            <person name="Land M."/>
            <person name="Lao V."/>
            <person name="Larimer F."/>
            <person name="LiPuma J.J."/>
            <person name="Mahenthiralingam E."/>
            <person name="Malfatti S.A."/>
            <person name="Marx C.J."/>
            <person name="Parnell J.J."/>
            <person name="Ramette A."/>
            <person name="Richardson P."/>
            <person name="Seeger M."/>
            <person name="Smith D."/>
            <person name="Spilker T."/>
            <person name="Sul W.J."/>
            <person name="Tsoi T.V."/>
            <person name="Ulrich L.E."/>
            <person name="Zhulin I.B."/>
            <person name="Tiedje J.M."/>
        </authorList>
    </citation>
    <scope>NUCLEOTIDE SEQUENCE [LARGE SCALE GENOMIC DNA]</scope>
    <source>
        <strain>LB400</strain>
    </source>
</reference>
<name>NUOH_PARXL</name>
<accession>Q142G6</accession>
<comment type="function">
    <text evidence="1">NDH-1 shuttles electrons from NADH, via FMN and iron-sulfur (Fe-S) centers, to quinones in the respiratory chain. The immediate electron acceptor for the enzyme in this species is believed to be ubiquinone. Couples the redox reaction to proton translocation (for every two electrons transferred, four hydrogen ions are translocated across the cytoplasmic membrane), and thus conserves the redox energy in a proton gradient. This subunit may bind ubiquinone.</text>
</comment>
<comment type="catalytic activity">
    <reaction evidence="1">
        <text>a quinone + NADH + 5 H(+)(in) = a quinol + NAD(+) + 4 H(+)(out)</text>
        <dbReference type="Rhea" id="RHEA:57888"/>
        <dbReference type="ChEBI" id="CHEBI:15378"/>
        <dbReference type="ChEBI" id="CHEBI:24646"/>
        <dbReference type="ChEBI" id="CHEBI:57540"/>
        <dbReference type="ChEBI" id="CHEBI:57945"/>
        <dbReference type="ChEBI" id="CHEBI:132124"/>
    </reaction>
</comment>
<comment type="subunit">
    <text evidence="1">NDH-1 is composed of 14 different subunits. Subunits NuoA, H, J, K, L, M, N constitute the membrane sector of the complex.</text>
</comment>
<comment type="subcellular location">
    <subcellularLocation>
        <location evidence="1">Cell inner membrane</location>
        <topology evidence="1">Multi-pass membrane protein</topology>
    </subcellularLocation>
</comment>
<comment type="similarity">
    <text evidence="1">Belongs to the complex I subunit 1 family.</text>
</comment>
<dbReference type="EC" id="7.1.1.-" evidence="1"/>
<dbReference type="EMBL" id="CP000270">
    <property type="protein sequence ID" value="ABE29773.1"/>
    <property type="molecule type" value="Genomic_DNA"/>
</dbReference>
<dbReference type="RefSeq" id="WP_011487498.1">
    <property type="nucleotide sequence ID" value="NC_007951.1"/>
</dbReference>
<dbReference type="SMR" id="Q142G6"/>
<dbReference type="STRING" id="266265.Bxe_A3207"/>
<dbReference type="KEGG" id="bxe:Bxe_A3207"/>
<dbReference type="PATRIC" id="fig|266265.5.peg.1271"/>
<dbReference type="eggNOG" id="COG1005">
    <property type="taxonomic scope" value="Bacteria"/>
</dbReference>
<dbReference type="OrthoDB" id="9803734at2"/>
<dbReference type="Proteomes" id="UP000001817">
    <property type="component" value="Chromosome 1"/>
</dbReference>
<dbReference type="GO" id="GO:0005886">
    <property type="term" value="C:plasma membrane"/>
    <property type="evidence" value="ECO:0007669"/>
    <property type="project" value="UniProtKB-SubCell"/>
</dbReference>
<dbReference type="GO" id="GO:0003954">
    <property type="term" value="F:NADH dehydrogenase activity"/>
    <property type="evidence" value="ECO:0007669"/>
    <property type="project" value="TreeGrafter"/>
</dbReference>
<dbReference type="GO" id="GO:0016655">
    <property type="term" value="F:oxidoreductase activity, acting on NAD(P)H, quinone or similar compound as acceptor"/>
    <property type="evidence" value="ECO:0007669"/>
    <property type="project" value="UniProtKB-UniRule"/>
</dbReference>
<dbReference type="GO" id="GO:0048038">
    <property type="term" value="F:quinone binding"/>
    <property type="evidence" value="ECO:0007669"/>
    <property type="project" value="UniProtKB-KW"/>
</dbReference>
<dbReference type="GO" id="GO:0009060">
    <property type="term" value="P:aerobic respiration"/>
    <property type="evidence" value="ECO:0007669"/>
    <property type="project" value="TreeGrafter"/>
</dbReference>
<dbReference type="HAMAP" id="MF_01350">
    <property type="entry name" value="NDH1_NuoH"/>
    <property type="match status" value="1"/>
</dbReference>
<dbReference type="InterPro" id="IPR001694">
    <property type="entry name" value="NADH_UbQ_OxRdtase_su1/FPO"/>
</dbReference>
<dbReference type="InterPro" id="IPR018086">
    <property type="entry name" value="NADH_UbQ_OxRdtase_su1_CS"/>
</dbReference>
<dbReference type="NCBIfam" id="NF004741">
    <property type="entry name" value="PRK06076.1-2"/>
    <property type="match status" value="1"/>
</dbReference>
<dbReference type="NCBIfam" id="NF004742">
    <property type="entry name" value="PRK06076.1-3"/>
    <property type="match status" value="1"/>
</dbReference>
<dbReference type="PANTHER" id="PTHR11432">
    <property type="entry name" value="NADH DEHYDROGENASE SUBUNIT 1"/>
    <property type="match status" value="1"/>
</dbReference>
<dbReference type="PANTHER" id="PTHR11432:SF3">
    <property type="entry name" value="NADH-UBIQUINONE OXIDOREDUCTASE CHAIN 1"/>
    <property type="match status" value="1"/>
</dbReference>
<dbReference type="Pfam" id="PF00146">
    <property type="entry name" value="NADHdh"/>
    <property type="match status" value="1"/>
</dbReference>
<dbReference type="PROSITE" id="PS00668">
    <property type="entry name" value="COMPLEX1_ND1_2"/>
    <property type="match status" value="1"/>
</dbReference>
<feature type="chain" id="PRO_0000298802" description="NADH-quinone oxidoreductase subunit H">
    <location>
        <begin position="1"/>
        <end position="354"/>
    </location>
</feature>
<feature type="transmembrane region" description="Helical" evidence="1">
    <location>
        <begin position="25"/>
        <end position="45"/>
    </location>
</feature>
<feature type="transmembrane region" description="Helical" evidence="1">
    <location>
        <begin position="91"/>
        <end position="111"/>
    </location>
</feature>
<feature type="transmembrane region" description="Helical" evidence="1">
    <location>
        <begin position="126"/>
        <end position="146"/>
    </location>
</feature>
<feature type="transmembrane region" description="Helical" evidence="1">
    <location>
        <begin position="170"/>
        <end position="190"/>
    </location>
</feature>
<feature type="transmembrane region" description="Helical" evidence="1">
    <location>
        <begin position="205"/>
        <end position="225"/>
    </location>
</feature>
<feature type="transmembrane region" description="Helical" evidence="1">
    <location>
        <begin position="267"/>
        <end position="287"/>
    </location>
</feature>
<feature type="transmembrane region" description="Helical" evidence="1">
    <location>
        <begin position="290"/>
        <end position="310"/>
    </location>
</feature>
<feature type="transmembrane region" description="Helical" evidence="1">
    <location>
        <begin position="330"/>
        <end position="350"/>
    </location>
</feature>
<keyword id="KW-0997">Cell inner membrane</keyword>
<keyword id="KW-1003">Cell membrane</keyword>
<keyword id="KW-0472">Membrane</keyword>
<keyword id="KW-0520">NAD</keyword>
<keyword id="KW-0874">Quinone</keyword>
<keyword id="KW-1185">Reference proteome</keyword>
<keyword id="KW-1278">Translocase</keyword>
<keyword id="KW-0812">Transmembrane</keyword>
<keyword id="KW-1133">Transmembrane helix</keyword>
<keyword id="KW-0830">Ubiquinone</keyword>